<evidence type="ECO:0000255" key="1">
    <source>
        <dbReference type="HAMAP-Rule" id="MF_01302"/>
    </source>
</evidence>
<evidence type="ECO:0000305" key="2"/>
<accession>Q089P0</accession>
<reference key="1">
    <citation type="submission" date="2006-08" db="EMBL/GenBank/DDBJ databases">
        <title>Complete sequence of Shewanella frigidimarina NCIMB 400.</title>
        <authorList>
            <consortium name="US DOE Joint Genome Institute"/>
            <person name="Copeland A."/>
            <person name="Lucas S."/>
            <person name="Lapidus A."/>
            <person name="Barry K."/>
            <person name="Detter J.C."/>
            <person name="Glavina del Rio T."/>
            <person name="Hammon N."/>
            <person name="Israni S."/>
            <person name="Dalin E."/>
            <person name="Tice H."/>
            <person name="Pitluck S."/>
            <person name="Fredrickson J.K."/>
            <person name="Kolker E."/>
            <person name="McCuel L.A."/>
            <person name="DiChristina T."/>
            <person name="Nealson K.H."/>
            <person name="Newman D."/>
            <person name="Tiedje J.M."/>
            <person name="Zhou J."/>
            <person name="Romine M.F."/>
            <person name="Culley D.E."/>
            <person name="Serres M."/>
            <person name="Chertkov O."/>
            <person name="Brettin T."/>
            <person name="Bruce D."/>
            <person name="Han C."/>
            <person name="Tapia R."/>
            <person name="Gilna P."/>
            <person name="Schmutz J."/>
            <person name="Larimer F."/>
            <person name="Land M."/>
            <person name="Hauser L."/>
            <person name="Kyrpides N."/>
            <person name="Mikhailova N."/>
            <person name="Richardson P."/>
        </authorList>
    </citation>
    <scope>NUCLEOTIDE SEQUENCE [LARGE SCALE GENOMIC DNA]</scope>
    <source>
        <strain>NCIMB 400</strain>
    </source>
</reference>
<organism>
    <name type="scientific">Shewanella frigidimarina (strain NCIMB 400)</name>
    <dbReference type="NCBI Taxonomy" id="318167"/>
    <lineage>
        <taxon>Bacteria</taxon>
        <taxon>Pseudomonadati</taxon>
        <taxon>Pseudomonadota</taxon>
        <taxon>Gammaproteobacteria</taxon>
        <taxon>Alteromonadales</taxon>
        <taxon>Shewanellaceae</taxon>
        <taxon>Shewanella</taxon>
    </lineage>
</organism>
<protein>
    <recommendedName>
        <fullName evidence="1">Small ribosomal subunit protein uS8</fullName>
    </recommendedName>
    <alternativeName>
        <fullName evidence="2">30S ribosomal protein S8</fullName>
    </alternativeName>
</protein>
<keyword id="KW-1185">Reference proteome</keyword>
<keyword id="KW-0687">Ribonucleoprotein</keyword>
<keyword id="KW-0689">Ribosomal protein</keyword>
<keyword id="KW-0694">RNA-binding</keyword>
<keyword id="KW-0699">rRNA-binding</keyword>
<name>RS8_SHEFN</name>
<proteinExistence type="inferred from homology"/>
<gene>
    <name evidence="1" type="primary">rpsH</name>
    <name type="ordered locus">Sfri_0162</name>
</gene>
<feature type="chain" id="PRO_0000290927" description="Small ribosomal subunit protein uS8">
    <location>
        <begin position="1"/>
        <end position="130"/>
    </location>
</feature>
<sequence length="130" mass="14105">MSMQDPIADMLTRIRNGQAANHVSVKMPSAKLKVAIAKLLKDEGFITEYAVADEAKPELEITLKYFQGKPVVETIQRVSRPGLRIYKGKDELPKVMGGLGIAIVSTSQGLMTDRAARQNGTGGEVICYVA</sequence>
<dbReference type="EMBL" id="CP000447">
    <property type="protein sequence ID" value="ABI70025.1"/>
    <property type="molecule type" value="Genomic_DNA"/>
</dbReference>
<dbReference type="RefSeq" id="WP_011635653.1">
    <property type="nucleotide sequence ID" value="NC_008345.1"/>
</dbReference>
<dbReference type="SMR" id="Q089P0"/>
<dbReference type="STRING" id="318167.Sfri_0162"/>
<dbReference type="KEGG" id="sfr:Sfri_0162"/>
<dbReference type="eggNOG" id="COG0096">
    <property type="taxonomic scope" value="Bacteria"/>
</dbReference>
<dbReference type="HOGENOM" id="CLU_098428_0_0_6"/>
<dbReference type="OrthoDB" id="9802617at2"/>
<dbReference type="Proteomes" id="UP000000684">
    <property type="component" value="Chromosome"/>
</dbReference>
<dbReference type="GO" id="GO:1990904">
    <property type="term" value="C:ribonucleoprotein complex"/>
    <property type="evidence" value="ECO:0007669"/>
    <property type="project" value="UniProtKB-KW"/>
</dbReference>
<dbReference type="GO" id="GO:0005840">
    <property type="term" value="C:ribosome"/>
    <property type="evidence" value="ECO:0007669"/>
    <property type="project" value="UniProtKB-KW"/>
</dbReference>
<dbReference type="GO" id="GO:0019843">
    <property type="term" value="F:rRNA binding"/>
    <property type="evidence" value="ECO:0007669"/>
    <property type="project" value="UniProtKB-UniRule"/>
</dbReference>
<dbReference type="GO" id="GO:0003735">
    <property type="term" value="F:structural constituent of ribosome"/>
    <property type="evidence" value="ECO:0007669"/>
    <property type="project" value="InterPro"/>
</dbReference>
<dbReference type="GO" id="GO:0006412">
    <property type="term" value="P:translation"/>
    <property type="evidence" value="ECO:0007669"/>
    <property type="project" value="UniProtKB-UniRule"/>
</dbReference>
<dbReference type="FunFam" id="3.30.1370.30:FF:000003">
    <property type="entry name" value="30S ribosomal protein S8"/>
    <property type="match status" value="1"/>
</dbReference>
<dbReference type="FunFam" id="3.30.1490.10:FF:000001">
    <property type="entry name" value="30S ribosomal protein S8"/>
    <property type="match status" value="1"/>
</dbReference>
<dbReference type="Gene3D" id="3.30.1370.30">
    <property type="match status" value="1"/>
</dbReference>
<dbReference type="Gene3D" id="3.30.1490.10">
    <property type="match status" value="1"/>
</dbReference>
<dbReference type="HAMAP" id="MF_01302_B">
    <property type="entry name" value="Ribosomal_uS8_B"/>
    <property type="match status" value="1"/>
</dbReference>
<dbReference type="InterPro" id="IPR000630">
    <property type="entry name" value="Ribosomal_uS8"/>
</dbReference>
<dbReference type="InterPro" id="IPR047863">
    <property type="entry name" value="Ribosomal_uS8_CS"/>
</dbReference>
<dbReference type="InterPro" id="IPR035987">
    <property type="entry name" value="Ribosomal_uS8_sf"/>
</dbReference>
<dbReference type="NCBIfam" id="NF001109">
    <property type="entry name" value="PRK00136.1"/>
    <property type="match status" value="1"/>
</dbReference>
<dbReference type="PANTHER" id="PTHR11758">
    <property type="entry name" value="40S RIBOSOMAL PROTEIN S15A"/>
    <property type="match status" value="1"/>
</dbReference>
<dbReference type="Pfam" id="PF00410">
    <property type="entry name" value="Ribosomal_S8"/>
    <property type="match status" value="1"/>
</dbReference>
<dbReference type="SUPFAM" id="SSF56047">
    <property type="entry name" value="Ribosomal protein S8"/>
    <property type="match status" value="1"/>
</dbReference>
<dbReference type="PROSITE" id="PS00053">
    <property type="entry name" value="RIBOSOMAL_S8"/>
    <property type="match status" value="1"/>
</dbReference>
<comment type="function">
    <text evidence="1">One of the primary rRNA binding proteins, it binds directly to 16S rRNA central domain where it helps coordinate assembly of the platform of the 30S subunit.</text>
</comment>
<comment type="subunit">
    <text evidence="1">Part of the 30S ribosomal subunit. Contacts proteins S5 and S12.</text>
</comment>
<comment type="similarity">
    <text evidence="1">Belongs to the universal ribosomal protein uS8 family.</text>
</comment>